<keyword id="KW-0963">Cytoplasm</keyword>
<keyword id="KW-0227">DNA damage</keyword>
<keyword id="KW-0234">DNA repair</keyword>
<keyword id="KW-0235">DNA replication</keyword>
<keyword id="KW-0238">DNA-binding</keyword>
<keyword id="KW-0239">DNA-directed DNA polymerase</keyword>
<keyword id="KW-0460">Magnesium</keyword>
<keyword id="KW-0479">Metal-binding</keyword>
<keyword id="KW-0515">Mutator protein</keyword>
<keyword id="KW-0548">Nucleotidyltransferase</keyword>
<keyword id="KW-1185">Reference proteome</keyword>
<keyword id="KW-0808">Transferase</keyword>
<dbReference type="EC" id="2.7.7.7" evidence="1"/>
<dbReference type="EMBL" id="AM180355">
    <property type="protein sequence ID" value="CAJ67732.1"/>
    <property type="molecule type" value="Genomic_DNA"/>
</dbReference>
<dbReference type="RefSeq" id="WP_011860981.1">
    <property type="nucleotide sequence ID" value="NZ_JAUPES010000038.1"/>
</dbReference>
<dbReference type="RefSeq" id="YP_001087373.1">
    <property type="nucleotide sequence ID" value="NC_009089.1"/>
</dbReference>
<dbReference type="SMR" id="Q18A91"/>
<dbReference type="STRING" id="272563.CD630_08990"/>
<dbReference type="EnsemblBacteria" id="CAJ67732">
    <property type="protein sequence ID" value="CAJ67732"/>
    <property type="gene ID" value="CD630_08990"/>
</dbReference>
<dbReference type="KEGG" id="cdf:CD630_08990"/>
<dbReference type="KEGG" id="pdc:CDIF630_01019"/>
<dbReference type="PATRIC" id="fig|272563.120.peg.923"/>
<dbReference type="eggNOG" id="COG0389">
    <property type="taxonomic scope" value="Bacteria"/>
</dbReference>
<dbReference type="OrthoDB" id="9808813at2"/>
<dbReference type="PhylomeDB" id="Q18A91"/>
<dbReference type="BioCyc" id="PDIF272563:G12WB-1007-MONOMER"/>
<dbReference type="Proteomes" id="UP000001978">
    <property type="component" value="Chromosome"/>
</dbReference>
<dbReference type="GO" id="GO:0005829">
    <property type="term" value="C:cytosol"/>
    <property type="evidence" value="ECO:0007669"/>
    <property type="project" value="TreeGrafter"/>
</dbReference>
<dbReference type="GO" id="GO:0003684">
    <property type="term" value="F:damaged DNA binding"/>
    <property type="evidence" value="ECO:0007669"/>
    <property type="project" value="InterPro"/>
</dbReference>
<dbReference type="GO" id="GO:0003887">
    <property type="term" value="F:DNA-directed DNA polymerase activity"/>
    <property type="evidence" value="ECO:0007669"/>
    <property type="project" value="UniProtKB-UniRule"/>
</dbReference>
<dbReference type="GO" id="GO:0000287">
    <property type="term" value="F:magnesium ion binding"/>
    <property type="evidence" value="ECO:0007669"/>
    <property type="project" value="UniProtKB-UniRule"/>
</dbReference>
<dbReference type="GO" id="GO:0006261">
    <property type="term" value="P:DNA-templated DNA replication"/>
    <property type="evidence" value="ECO:0007669"/>
    <property type="project" value="UniProtKB-UniRule"/>
</dbReference>
<dbReference type="GO" id="GO:0042276">
    <property type="term" value="P:error-prone translesion synthesis"/>
    <property type="evidence" value="ECO:0007669"/>
    <property type="project" value="TreeGrafter"/>
</dbReference>
<dbReference type="GO" id="GO:0009432">
    <property type="term" value="P:SOS response"/>
    <property type="evidence" value="ECO:0007669"/>
    <property type="project" value="TreeGrafter"/>
</dbReference>
<dbReference type="CDD" id="cd03586">
    <property type="entry name" value="PolY_Pol_IV_kappa"/>
    <property type="match status" value="1"/>
</dbReference>
<dbReference type="FunFam" id="3.30.1490.100:FF:000004">
    <property type="entry name" value="DNA polymerase IV"/>
    <property type="match status" value="1"/>
</dbReference>
<dbReference type="FunFam" id="3.40.1170.60:FF:000001">
    <property type="entry name" value="DNA polymerase IV"/>
    <property type="match status" value="1"/>
</dbReference>
<dbReference type="Gene3D" id="3.30.70.270">
    <property type="match status" value="1"/>
</dbReference>
<dbReference type="Gene3D" id="3.40.1170.60">
    <property type="match status" value="1"/>
</dbReference>
<dbReference type="Gene3D" id="1.10.150.20">
    <property type="entry name" value="5' to 3' exonuclease, C-terminal subdomain"/>
    <property type="match status" value="1"/>
</dbReference>
<dbReference type="Gene3D" id="3.30.1490.100">
    <property type="entry name" value="DNA polymerase, Y-family, little finger domain"/>
    <property type="match status" value="1"/>
</dbReference>
<dbReference type="HAMAP" id="MF_01113">
    <property type="entry name" value="DNApol_IV"/>
    <property type="match status" value="1"/>
</dbReference>
<dbReference type="InterPro" id="IPR043502">
    <property type="entry name" value="DNA/RNA_pol_sf"/>
</dbReference>
<dbReference type="InterPro" id="IPR036775">
    <property type="entry name" value="DNA_pol_Y-fam_lit_finger_sf"/>
</dbReference>
<dbReference type="InterPro" id="IPR017961">
    <property type="entry name" value="DNA_pol_Y-fam_little_finger"/>
</dbReference>
<dbReference type="InterPro" id="IPR050116">
    <property type="entry name" value="DNA_polymerase-Y"/>
</dbReference>
<dbReference type="InterPro" id="IPR022880">
    <property type="entry name" value="DNApol_IV"/>
</dbReference>
<dbReference type="InterPro" id="IPR053848">
    <property type="entry name" value="IMS_HHH_1"/>
</dbReference>
<dbReference type="InterPro" id="IPR043128">
    <property type="entry name" value="Rev_trsase/Diguanyl_cyclase"/>
</dbReference>
<dbReference type="InterPro" id="IPR001126">
    <property type="entry name" value="UmuC"/>
</dbReference>
<dbReference type="NCBIfam" id="NF002677">
    <property type="entry name" value="PRK02406.1"/>
    <property type="match status" value="1"/>
</dbReference>
<dbReference type="NCBIfam" id="NF010731">
    <property type="entry name" value="PRK14133.1"/>
    <property type="match status" value="1"/>
</dbReference>
<dbReference type="PANTHER" id="PTHR11076:SF33">
    <property type="entry name" value="DNA POLYMERASE KAPPA"/>
    <property type="match status" value="1"/>
</dbReference>
<dbReference type="PANTHER" id="PTHR11076">
    <property type="entry name" value="DNA REPAIR POLYMERASE UMUC / TRANSFERASE FAMILY MEMBER"/>
    <property type="match status" value="1"/>
</dbReference>
<dbReference type="Pfam" id="PF00817">
    <property type="entry name" value="IMS"/>
    <property type="match status" value="1"/>
</dbReference>
<dbReference type="Pfam" id="PF11799">
    <property type="entry name" value="IMS_C"/>
    <property type="match status" value="1"/>
</dbReference>
<dbReference type="Pfam" id="PF21999">
    <property type="entry name" value="IMS_HHH_1"/>
    <property type="match status" value="1"/>
</dbReference>
<dbReference type="SUPFAM" id="SSF56672">
    <property type="entry name" value="DNA/RNA polymerases"/>
    <property type="match status" value="1"/>
</dbReference>
<dbReference type="SUPFAM" id="SSF100879">
    <property type="entry name" value="Lesion bypass DNA polymerase (Y-family), little finger domain"/>
    <property type="match status" value="1"/>
</dbReference>
<dbReference type="PROSITE" id="PS50173">
    <property type="entry name" value="UMUC"/>
    <property type="match status" value="1"/>
</dbReference>
<name>DPO4_CLOD6</name>
<sequence length="365" mass="42009">MKHYRKIIHIDMDAFYASIEQRDNKKLKGRPVIVGGNPQSRGVVATCSYEARKFGIHSAMPSAVAYNRCPYAVFVRPRFDVYKSVSEKIRDIFYRYTDLVEPLSLDEAYLDVTKNKKNIDSSIEIAKQIKKDIFREVGLTSSAGVSYNKFLAKIASDLRKPNGLTVITEENAQDFLDKLPVNKFFGVGKVTSNTLKNLGIKTGYDLRCLNLFELENIFKKRGYELYKFARGIDDRPVEPNRVRKSVGAETTLSHNLDIDEEETRNILDELCEEVCHRLKNSEKFGKTLTLKIKYEDFTKITRSLSLEHYIDEYNDIRSGVDNLLRNVEVNGKQIRLLGVTISNLSDKKETYKDITLFEYMDSIQM</sequence>
<reference key="1">
    <citation type="journal article" date="2006" name="Nat. Genet.">
        <title>The multidrug-resistant human pathogen Clostridium difficile has a highly mobile, mosaic genome.</title>
        <authorList>
            <person name="Sebaihia M."/>
            <person name="Wren B.W."/>
            <person name="Mullany P."/>
            <person name="Fairweather N.F."/>
            <person name="Minton N."/>
            <person name="Stabler R."/>
            <person name="Thomson N.R."/>
            <person name="Roberts A.P."/>
            <person name="Cerdeno-Tarraga A.M."/>
            <person name="Wang H."/>
            <person name="Holden M.T.G."/>
            <person name="Wright A."/>
            <person name="Churcher C."/>
            <person name="Quail M.A."/>
            <person name="Baker S."/>
            <person name="Bason N."/>
            <person name="Brooks K."/>
            <person name="Chillingworth T."/>
            <person name="Cronin A."/>
            <person name="Davis P."/>
            <person name="Dowd L."/>
            <person name="Fraser A."/>
            <person name="Feltwell T."/>
            <person name="Hance Z."/>
            <person name="Holroyd S."/>
            <person name="Jagels K."/>
            <person name="Moule S."/>
            <person name="Mungall K."/>
            <person name="Price C."/>
            <person name="Rabbinowitsch E."/>
            <person name="Sharp S."/>
            <person name="Simmonds M."/>
            <person name="Stevens K."/>
            <person name="Unwin L."/>
            <person name="Whithead S."/>
            <person name="Dupuy B."/>
            <person name="Dougan G."/>
            <person name="Barrell B."/>
            <person name="Parkhill J."/>
        </authorList>
    </citation>
    <scope>NUCLEOTIDE SEQUENCE [LARGE SCALE GENOMIC DNA]</scope>
    <source>
        <strain>630</strain>
    </source>
</reference>
<evidence type="ECO:0000255" key="1">
    <source>
        <dbReference type="HAMAP-Rule" id="MF_01113"/>
    </source>
</evidence>
<organism>
    <name type="scientific">Clostridioides difficile (strain 630)</name>
    <name type="common">Peptoclostridium difficile</name>
    <dbReference type="NCBI Taxonomy" id="272563"/>
    <lineage>
        <taxon>Bacteria</taxon>
        <taxon>Bacillati</taxon>
        <taxon>Bacillota</taxon>
        <taxon>Clostridia</taxon>
        <taxon>Peptostreptococcales</taxon>
        <taxon>Peptostreptococcaceae</taxon>
        <taxon>Clostridioides</taxon>
    </lineage>
</organism>
<comment type="function">
    <text evidence="1">Poorly processive, error-prone DNA polymerase involved in untargeted mutagenesis. Copies undamaged DNA at stalled replication forks, which arise in vivo from mismatched or misaligned primer ends. These misaligned primers can be extended by PolIV. Exhibits no 3'-5' exonuclease (proofreading) activity. May be involved in translesional synthesis, in conjunction with the beta clamp from PolIII.</text>
</comment>
<comment type="catalytic activity">
    <reaction evidence="1">
        <text>DNA(n) + a 2'-deoxyribonucleoside 5'-triphosphate = DNA(n+1) + diphosphate</text>
        <dbReference type="Rhea" id="RHEA:22508"/>
        <dbReference type="Rhea" id="RHEA-COMP:17339"/>
        <dbReference type="Rhea" id="RHEA-COMP:17340"/>
        <dbReference type="ChEBI" id="CHEBI:33019"/>
        <dbReference type="ChEBI" id="CHEBI:61560"/>
        <dbReference type="ChEBI" id="CHEBI:173112"/>
        <dbReference type="EC" id="2.7.7.7"/>
    </reaction>
</comment>
<comment type="cofactor">
    <cofactor evidence="1">
        <name>Mg(2+)</name>
        <dbReference type="ChEBI" id="CHEBI:18420"/>
    </cofactor>
    <text evidence="1">Binds 2 magnesium ions per subunit.</text>
</comment>
<comment type="subunit">
    <text evidence="1">Monomer.</text>
</comment>
<comment type="subcellular location">
    <subcellularLocation>
        <location evidence="1">Cytoplasm</location>
    </subcellularLocation>
</comment>
<comment type="similarity">
    <text evidence="1">Belongs to the DNA polymerase type-Y family.</text>
</comment>
<protein>
    <recommendedName>
        <fullName evidence="1">DNA polymerase IV</fullName>
        <shortName evidence="1">Pol IV</shortName>
        <ecNumber evidence="1">2.7.7.7</ecNumber>
    </recommendedName>
</protein>
<feature type="chain" id="PRO_1000084881" description="DNA polymerase IV">
    <location>
        <begin position="1"/>
        <end position="365"/>
    </location>
</feature>
<feature type="domain" description="UmuC" evidence="1">
    <location>
        <begin position="7"/>
        <end position="188"/>
    </location>
</feature>
<feature type="active site" evidence="1">
    <location>
        <position position="107"/>
    </location>
</feature>
<feature type="binding site" evidence="1">
    <location>
        <position position="11"/>
    </location>
    <ligand>
        <name>Mg(2+)</name>
        <dbReference type="ChEBI" id="CHEBI:18420"/>
    </ligand>
</feature>
<feature type="binding site" evidence="1">
    <location>
        <position position="106"/>
    </location>
    <ligand>
        <name>Mg(2+)</name>
        <dbReference type="ChEBI" id="CHEBI:18420"/>
    </ligand>
</feature>
<feature type="site" description="Substrate discrimination" evidence="1">
    <location>
        <position position="16"/>
    </location>
</feature>
<proteinExistence type="inferred from homology"/>
<accession>Q18A91</accession>
<gene>
    <name evidence="1" type="primary">dinB</name>
    <name type="ordered locus">CD630_08990</name>
</gene>